<name>RS12_ECO7I</name>
<accession>B7NLP7</accession>
<sequence>MATVNQLVRKPRARKVAKSNVPALEACPQKRGVCTRVYTTTPKKPNSALRKVCRVRLTNGFEVTSYIGGEGHNLQEHSVILIRGGRVKDLPGVRYHTVRGALDCSGVKDRKQARSKYGVKRPKA</sequence>
<feature type="chain" id="PRO_1000194166" description="Small ribosomal subunit protein uS12">
    <location>
        <begin position="1"/>
        <end position="124"/>
    </location>
</feature>
<feature type="modified residue" description="3-methylthioaspartic acid" evidence="1">
    <location>
        <position position="89"/>
    </location>
</feature>
<feature type="modified residue" description="N6-acetyllysine" evidence="2">
    <location>
        <position position="108"/>
    </location>
</feature>
<gene>
    <name evidence="2" type="primary">rpsL</name>
    <name type="ordered locus">ECIAI39_3822</name>
</gene>
<dbReference type="EMBL" id="CU928164">
    <property type="protein sequence ID" value="CAR19936.1"/>
    <property type="molecule type" value="Genomic_DNA"/>
</dbReference>
<dbReference type="RefSeq" id="WP_000246815.1">
    <property type="nucleotide sequence ID" value="NC_011750.1"/>
</dbReference>
<dbReference type="RefSeq" id="YP_002409719.1">
    <property type="nucleotide sequence ID" value="NC_011750.1"/>
</dbReference>
<dbReference type="SMR" id="B7NLP7"/>
<dbReference type="STRING" id="585057.ECIAI39_3822"/>
<dbReference type="GeneID" id="98390450"/>
<dbReference type="KEGG" id="ect:ECIAI39_3822"/>
<dbReference type="PATRIC" id="fig|585057.6.peg.3959"/>
<dbReference type="HOGENOM" id="CLU_104295_1_2_6"/>
<dbReference type="PRO" id="PR:B7NLP7"/>
<dbReference type="Proteomes" id="UP000000749">
    <property type="component" value="Chromosome"/>
</dbReference>
<dbReference type="GO" id="GO:0015935">
    <property type="term" value="C:small ribosomal subunit"/>
    <property type="evidence" value="ECO:0007669"/>
    <property type="project" value="InterPro"/>
</dbReference>
<dbReference type="GO" id="GO:0019843">
    <property type="term" value="F:rRNA binding"/>
    <property type="evidence" value="ECO:0007669"/>
    <property type="project" value="UniProtKB-UniRule"/>
</dbReference>
<dbReference type="GO" id="GO:0003735">
    <property type="term" value="F:structural constituent of ribosome"/>
    <property type="evidence" value="ECO:0007669"/>
    <property type="project" value="InterPro"/>
</dbReference>
<dbReference type="GO" id="GO:0000049">
    <property type="term" value="F:tRNA binding"/>
    <property type="evidence" value="ECO:0007669"/>
    <property type="project" value="UniProtKB-UniRule"/>
</dbReference>
<dbReference type="GO" id="GO:0006412">
    <property type="term" value="P:translation"/>
    <property type="evidence" value="ECO:0007669"/>
    <property type="project" value="UniProtKB-UniRule"/>
</dbReference>
<dbReference type="CDD" id="cd03368">
    <property type="entry name" value="Ribosomal_S12"/>
    <property type="match status" value="1"/>
</dbReference>
<dbReference type="FunFam" id="2.40.50.140:FF:000001">
    <property type="entry name" value="30S ribosomal protein S12"/>
    <property type="match status" value="1"/>
</dbReference>
<dbReference type="Gene3D" id="2.40.50.140">
    <property type="entry name" value="Nucleic acid-binding proteins"/>
    <property type="match status" value="1"/>
</dbReference>
<dbReference type="HAMAP" id="MF_00403_B">
    <property type="entry name" value="Ribosomal_uS12_B"/>
    <property type="match status" value="1"/>
</dbReference>
<dbReference type="InterPro" id="IPR012340">
    <property type="entry name" value="NA-bd_OB-fold"/>
</dbReference>
<dbReference type="InterPro" id="IPR006032">
    <property type="entry name" value="Ribosomal_uS12"/>
</dbReference>
<dbReference type="InterPro" id="IPR005679">
    <property type="entry name" value="Ribosomal_uS12_bac"/>
</dbReference>
<dbReference type="NCBIfam" id="TIGR00981">
    <property type="entry name" value="rpsL_bact"/>
    <property type="match status" value="1"/>
</dbReference>
<dbReference type="PANTHER" id="PTHR11652">
    <property type="entry name" value="30S RIBOSOMAL PROTEIN S12 FAMILY MEMBER"/>
    <property type="match status" value="1"/>
</dbReference>
<dbReference type="Pfam" id="PF00164">
    <property type="entry name" value="Ribosom_S12_S23"/>
    <property type="match status" value="1"/>
</dbReference>
<dbReference type="PIRSF" id="PIRSF002133">
    <property type="entry name" value="Ribosomal_S12/S23"/>
    <property type="match status" value="1"/>
</dbReference>
<dbReference type="PRINTS" id="PR01034">
    <property type="entry name" value="RIBOSOMALS12"/>
</dbReference>
<dbReference type="SUPFAM" id="SSF50249">
    <property type="entry name" value="Nucleic acid-binding proteins"/>
    <property type="match status" value="1"/>
</dbReference>
<dbReference type="PROSITE" id="PS00055">
    <property type="entry name" value="RIBOSOMAL_S12"/>
    <property type="match status" value="1"/>
</dbReference>
<reference key="1">
    <citation type="journal article" date="2009" name="PLoS Genet.">
        <title>Organised genome dynamics in the Escherichia coli species results in highly diverse adaptive paths.</title>
        <authorList>
            <person name="Touchon M."/>
            <person name="Hoede C."/>
            <person name="Tenaillon O."/>
            <person name="Barbe V."/>
            <person name="Baeriswyl S."/>
            <person name="Bidet P."/>
            <person name="Bingen E."/>
            <person name="Bonacorsi S."/>
            <person name="Bouchier C."/>
            <person name="Bouvet O."/>
            <person name="Calteau A."/>
            <person name="Chiapello H."/>
            <person name="Clermont O."/>
            <person name="Cruveiller S."/>
            <person name="Danchin A."/>
            <person name="Diard M."/>
            <person name="Dossat C."/>
            <person name="Karoui M.E."/>
            <person name="Frapy E."/>
            <person name="Garry L."/>
            <person name="Ghigo J.M."/>
            <person name="Gilles A.M."/>
            <person name="Johnson J."/>
            <person name="Le Bouguenec C."/>
            <person name="Lescat M."/>
            <person name="Mangenot S."/>
            <person name="Martinez-Jehanne V."/>
            <person name="Matic I."/>
            <person name="Nassif X."/>
            <person name="Oztas S."/>
            <person name="Petit M.A."/>
            <person name="Pichon C."/>
            <person name="Rouy Z."/>
            <person name="Ruf C.S."/>
            <person name="Schneider D."/>
            <person name="Tourret J."/>
            <person name="Vacherie B."/>
            <person name="Vallenet D."/>
            <person name="Medigue C."/>
            <person name="Rocha E.P.C."/>
            <person name="Denamur E."/>
        </authorList>
    </citation>
    <scope>NUCLEOTIDE SEQUENCE [LARGE SCALE GENOMIC DNA]</scope>
    <source>
        <strain>IAI39 / ExPEC</strain>
    </source>
</reference>
<evidence type="ECO:0000250" key="1"/>
<evidence type="ECO:0000255" key="2">
    <source>
        <dbReference type="HAMAP-Rule" id="MF_00403"/>
    </source>
</evidence>
<evidence type="ECO:0000305" key="3"/>
<organism>
    <name type="scientific">Escherichia coli O7:K1 (strain IAI39 / ExPEC)</name>
    <dbReference type="NCBI Taxonomy" id="585057"/>
    <lineage>
        <taxon>Bacteria</taxon>
        <taxon>Pseudomonadati</taxon>
        <taxon>Pseudomonadota</taxon>
        <taxon>Gammaproteobacteria</taxon>
        <taxon>Enterobacterales</taxon>
        <taxon>Enterobacteriaceae</taxon>
        <taxon>Escherichia</taxon>
    </lineage>
</organism>
<keyword id="KW-0007">Acetylation</keyword>
<keyword id="KW-0488">Methylation</keyword>
<keyword id="KW-0687">Ribonucleoprotein</keyword>
<keyword id="KW-0689">Ribosomal protein</keyword>
<keyword id="KW-0694">RNA-binding</keyword>
<keyword id="KW-0699">rRNA-binding</keyword>
<keyword id="KW-0820">tRNA-binding</keyword>
<proteinExistence type="inferred from homology"/>
<comment type="function">
    <text evidence="2">With S4 and S5 plays an important role in translational accuracy.</text>
</comment>
<comment type="function">
    <text evidence="2">Interacts with and stabilizes bases of the 16S rRNA that are involved in tRNA selection in the A site and with the mRNA backbone. Located at the interface of the 30S and 50S subunits, it traverses the body of the 30S subunit contacting proteins on the other side and probably holding the rRNA structure together. The combined cluster of proteins S8, S12 and S17 appears to hold together the shoulder and platform of the 30S subunit.</text>
</comment>
<comment type="subunit">
    <text evidence="2">Part of the 30S ribosomal subunit. Contacts proteins S8 and S17. May interact with IF1 in the 30S initiation complex.</text>
</comment>
<comment type="similarity">
    <text evidence="2">Belongs to the universal ribosomal protein uS12 family.</text>
</comment>
<protein>
    <recommendedName>
        <fullName evidence="2">Small ribosomal subunit protein uS12</fullName>
    </recommendedName>
    <alternativeName>
        <fullName evidence="3">30S ribosomal protein S12</fullName>
    </alternativeName>
</protein>